<sequence>MKITLPEYDKAQVLVVGDVMLDRYWHGPTARISPEAPVPVVKVEQIEERPGGAANVALNVAALGGKVNLIGLVGDDEAANVLVKNLKSVHVNTDFVSVPNFPTITKLRVLSRHQQLLRLDFEEGFEGIDSTDILEKMHASLTRQPSVVILSDYNKGSLADVQKMIQLAKKFNSVVLVDPKGSEFEKYRGATLLTPNLAEFEAVVGKCHSEKELVERGLALIKELDLDALLVTRSEHGMTLLREGQEPLHLPTQAQEVYDVTGAGDTVISVLASSLAAGSSFEQACTLANAAAGVVVGKIGTSTVNTIELANAVYSQQEIGFGVLSEEQLKLAVKLAQHRGEKVVMTNGCFDILHAGHVSYLNTAREQGNRLIVAVNSDQSVRNLKGQGRPVNPVDRRMAVLAGLGAVDWVIEFTEETPQRLIAEILPDLLVKGGDYLPEDIAGGKEVIANGGEVRVLQFEEGCSTSEIIKTIRNNS</sequence>
<evidence type="ECO:0000255" key="1">
    <source>
        <dbReference type="HAMAP-Rule" id="MF_01603"/>
    </source>
</evidence>
<accession>A1SZY2</accession>
<name>HLDE_PSYIN</name>
<dbReference type="EC" id="2.7.1.167" evidence="1"/>
<dbReference type="EC" id="2.7.7.70" evidence="1"/>
<dbReference type="EMBL" id="CP000510">
    <property type="protein sequence ID" value="ABM05047.1"/>
    <property type="molecule type" value="Genomic_DNA"/>
</dbReference>
<dbReference type="RefSeq" id="WP_011771599.1">
    <property type="nucleotide sequence ID" value="NC_008709.1"/>
</dbReference>
<dbReference type="SMR" id="A1SZY2"/>
<dbReference type="STRING" id="357804.Ping_3361"/>
<dbReference type="KEGG" id="pin:Ping_3361"/>
<dbReference type="eggNOG" id="COG0615">
    <property type="taxonomic scope" value="Bacteria"/>
</dbReference>
<dbReference type="eggNOG" id="COG2870">
    <property type="taxonomic scope" value="Bacteria"/>
</dbReference>
<dbReference type="HOGENOM" id="CLU_021150_2_1_6"/>
<dbReference type="OrthoDB" id="9802794at2"/>
<dbReference type="UniPathway" id="UPA00356">
    <property type="reaction ID" value="UER00437"/>
</dbReference>
<dbReference type="UniPathway" id="UPA00356">
    <property type="reaction ID" value="UER00439"/>
</dbReference>
<dbReference type="Proteomes" id="UP000000639">
    <property type="component" value="Chromosome"/>
</dbReference>
<dbReference type="GO" id="GO:0005829">
    <property type="term" value="C:cytosol"/>
    <property type="evidence" value="ECO:0007669"/>
    <property type="project" value="TreeGrafter"/>
</dbReference>
<dbReference type="GO" id="GO:0005524">
    <property type="term" value="F:ATP binding"/>
    <property type="evidence" value="ECO:0007669"/>
    <property type="project" value="UniProtKB-UniRule"/>
</dbReference>
<dbReference type="GO" id="GO:0033785">
    <property type="term" value="F:heptose 7-phosphate kinase activity"/>
    <property type="evidence" value="ECO:0007669"/>
    <property type="project" value="UniProtKB-UniRule"/>
</dbReference>
<dbReference type="GO" id="GO:0033786">
    <property type="term" value="F:heptose-1-phosphate adenylyltransferase activity"/>
    <property type="evidence" value="ECO:0007669"/>
    <property type="project" value="UniProtKB-UniRule"/>
</dbReference>
<dbReference type="GO" id="GO:0016773">
    <property type="term" value="F:phosphotransferase activity, alcohol group as acceptor"/>
    <property type="evidence" value="ECO:0007669"/>
    <property type="project" value="InterPro"/>
</dbReference>
<dbReference type="GO" id="GO:0097171">
    <property type="term" value="P:ADP-L-glycero-beta-D-manno-heptose biosynthetic process"/>
    <property type="evidence" value="ECO:0007669"/>
    <property type="project" value="UniProtKB-UniPathway"/>
</dbReference>
<dbReference type="CDD" id="cd01172">
    <property type="entry name" value="RfaE_like"/>
    <property type="match status" value="1"/>
</dbReference>
<dbReference type="FunFam" id="3.40.1190.20:FF:000002">
    <property type="entry name" value="Bifunctional protein HldE"/>
    <property type="match status" value="1"/>
</dbReference>
<dbReference type="FunFam" id="3.40.50.620:FF:000028">
    <property type="entry name" value="Bifunctional protein HldE"/>
    <property type="match status" value="1"/>
</dbReference>
<dbReference type="Gene3D" id="3.40.1190.20">
    <property type="match status" value="1"/>
</dbReference>
<dbReference type="Gene3D" id="3.40.50.620">
    <property type="entry name" value="HUPs"/>
    <property type="match status" value="1"/>
</dbReference>
<dbReference type="HAMAP" id="MF_01603">
    <property type="entry name" value="HldE"/>
    <property type="match status" value="1"/>
</dbReference>
<dbReference type="InterPro" id="IPR023030">
    <property type="entry name" value="Bifunc_HldE"/>
</dbReference>
<dbReference type="InterPro" id="IPR002173">
    <property type="entry name" value="Carboh/pur_kinase_PfkB_CS"/>
</dbReference>
<dbReference type="InterPro" id="IPR004821">
    <property type="entry name" value="Cyt_trans-like"/>
</dbReference>
<dbReference type="InterPro" id="IPR011611">
    <property type="entry name" value="PfkB_dom"/>
</dbReference>
<dbReference type="InterPro" id="IPR011913">
    <property type="entry name" value="RfaE_dom_I"/>
</dbReference>
<dbReference type="InterPro" id="IPR011914">
    <property type="entry name" value="RfaE_dom_II"/>
</dbReference>
<dbReference type="InterPro" id="IPR029056">
    <property type="entry name" value="Ribokinase-like"/>
</dbReference>
<dbReference type="InterPro" id="IPR014729">
    <property type="entry name" value="Rossmann-like_a/b/a_fold"/>
</dbReference>
<dbReference type="NCBIfam" id="TIGR00125">
    <property type="entry name" value="cyt_tran_rel"/>
    <property type="match status" value="1"/>
</dbReference>
<dbReference type="NCBIfam" id="NF008454">
    <property type="entry name" value="PRK11316.1"/>
    <property type="match status" value="1"/>
</dbReference>
<dbReference type="NCBIfam" id="TIGR02198">
    <property type="entry name" value="rfaE_dom_I"/>
    <property type="match status" value="1"/>
</dbReference>
<dbReference type="NCBIfam" id="TIGR02199">
    <property type="entry name" value="rfaE_dom_II"/>
    <property type="match status" value="1"/>
</dbReference>
<dbReference type="PANTHER" id="PTHR46969">
    <property type="entry name" value="BIFUNCTIONAL PROTEIN HLDE"/>
    <property type="match status" value="1"/>
</dbReference>
<dbReference type="PANTHER" id="PTHR46969:SF1">
    <property type="entry name" value="BIFUNCTIONAL PROTEIN HLDE"/>
    <property type="match status" value="1"/>
</dbReference>
<dbReference type="Pfam" id="PF01467">
    <property type="entry name" value="CTP_transf_like"/>
    <property type="match status" value="1"/>
</dbReference>
<dbReference type="Pfam" id="PF00294">
    <property type="entry name" value="PfkB"/>
    <property type="match status" value="1"/>
</dbReference>
<dbReference type="SUPFAM" id="SSF52374">
    <property type="entry name" value="Nucleotidylyl transferase"/>
    <property type="match status" value="1"/>
</dbReference>
<dbReference type="SUPFAM" id="SSF53613">
    <property type="entry name" value="Ribokinase-like"/>
    <property type="match status" value="1"/>
</dbReference>
<dbReference type="PROSITE" id="PS00583">
    <property type="entry name" value="PFKB_KINASES_1"/>
    <property type="match status" value="1"/>
</dbReference>
<gene>
    <name evidence="1" type="primary">hldE</name>
    <name type="ordered locus">Ping_3361</name>
</gene>
<proteinExistence type="inferred from homology"/>
<keyword id="KW-0067">ATP-binding</keyword>
<keyword id="KW-0119">Carbohydrate metabolism</keyword>
<keyword id="KW-0418">Kinase</keyword>
<keyword id="KW-0511">Multifunctional enzyme</keyword>
<keyword id="KW-0547">Nucleotide-binding</keyword>
<keyword id="KW-0548">Nucleotidyltransferase</keyword>
<keyword id="KW-1185">Reference proteome</keyword>
<keyword id="KW-0808">Transferase</keyword>
<comment type="function">
    <text evidence="1">Catalyzes the phosphorylation of D-glycero-D-manno-heptose 7-phosphate at the C-1 position to selectively form D-glycero-beta-D-manno-heptose-1,7-bisphosphate.</text>
</comment>
<comment type="function">
    <text evidence="1">Catalyzes the ADP transfer from ATP to D-glycero-beta-D-manno-heptose 1-phosphate, yielding ADP-D-glycero-beta-D-manno-heptose.</text>
</comment>
<comment type="catalytic activity">
    <reaction evidence="1">
        <text>D-glycero-beta-D-manno-heptose 7-phosphate + ATP = D-glycero-beta-D-manno-heptose 1,7-bisphosphate + ADP + H(+)</text>
        <dbReference type="Rhea" id="RHEA:27473"/>
        <dbReference type="ChEBI" id="CHEBI:15378"/>
        <dbReference type="ChEBI" id="CHEBI:30616"/>
        <dbReference type="ChEBI" id="CHEBI:60204"/>
        <dbReference type="ChEBI" id="CHEBI:60208"/>
        <dbReference type="ChEBI" id="CHEBI:456216"/>
        <dbReference type="EC" id="2.7.1.167"/>
    </reaction>
</comment>
<comment type="catalytic activity">
    <reaction evidence="1">
        <text>D-glycero-beta-D-manno-heptose 1-phosphate + ATP + H(+) = ADP-D-glycero-beta-D-manno-heptose + diphosphate</text>
        <dbReference type="Rhea" id="RHEA:27465"/>
        <dbReference type="ChEBI" id="CHEBI:15378"/>
        <dbReference type="ChEBI" id="CHEBI:30616"/>
        <dbReference type="ChEBI" id="CHEBI:33019"/>
        <dbReference type="ChEBI" id="CHEBI:59967"/>
        <dbReference type="ChEBI" id="CHEBI:61593"/>
        <dbReference type="EC" id="2.7.7.70"/>
    </reaction>
</comment>
<comment type="pathway">
    <text evidence="1">Nucleotide-sugar biosynthesis; ADP-L-glycero-beta-D-manno-heptose biosynthesis; ADP-L-glycero-beta-D-manno-heptose from D-glycero-beta-D-manno-heptose 7-phosphate: step 1/4.</text>
</comment>
<comment type="pathway">
    <text evidence="1">Nucleotide-sugar biosynthesis; ADP-L-glycero-beta-D-manno-heptose biosynthesis; ADP-L-glycero-beta-D-manno-heptose from D-glycero-beta-D-manno-heptose 7-phosphate: step 3/4.</text>
</comment>
<comment type="subunit">
    <text evidence="1">Homodimer.</text>
</comment>
<comment type="similarity">
    <text evidence="1">In the N-terminal section; belongs to the carbohydrate kinase PfkB family.</text>
</comment>
<comment type="similarity">
    <text evidence="1">In the C-terminal section; belongs to the cytidylyltransferase family.</text>
</comment>
<protein>
    <recommendedName>
        <fullName evidence="1">Bifunctional protein HldE</fullName>
    </recommendedName>
    <domain>
        <recommendedName>
            <fullName evidence="1">D-beta-D-heptose 7-phosphate kinase</fullName>
            <ecNumber evidence="1">2.7.1.167</ecNumber>
        </recommendedName>
        <alternativeName>
            <fullName evidence="1">D-beta-D-heptose 7-phosphotransferase</fullName>
        </alternativeName>
        <alternativeName>
            <fullName evidence="1">D-glycero-beta-D-manno-heptose-7-phosphate kinase</fullName>
        </alternativeName>
    </domain>
    <domain>
        <recommendedName>
            <fullName evidence="1">D-beta-D-heptose 1-phosphate adenylyltransferase</fullName>
            <ecNumber evidence="1">2.7.7.70</ecNumber>
        </recommendedName>
        <alternativeName>
            <fullName evidence="1">D-glycero-beta-D-manno-heptose 1-phosphate adenylyltransferase</fullName>
        </alternativeName>
    </domain>
</protein>
<organism>
    <name type="scientific">Psychromonas ingrahamii (strain DSM 17664 / CCUG 51855 / 37)</name>
    <dbReference type="NCBI Taxonomy" id="357804"/>
    <lineage>
        <taxon>Bacteria</taxon>
        <taxon>Pseudomonadati</taxon>
        <taxon>Pseudomonadota</taxon>
        <taxon>Gammaproteobacteria</taxon>
        <taxon>Alteromonadales</taxon>
        <taxon>Psychromonadaceae</taxon>
        <taxon>Psychromonas</taxon>
    </lineage>
</organism>
<feature type="chain" id="PRO_0000291683" description="Bifunctional protein HldE">
    <location>
        <begin position="1"/>
        <end position="476"/>
    </location>
</feature>
<feature type="region of interest" description="Ribokinase">
    <location>
        <begin position="1"/>
        <end position="319"/>
    </location>
</feature>
<feature type="region of interest" description="Cytidylyltransferase">
    <location>
        <begin position="345"/>
        <end position="476"/>
    </location>
</feature>
<feature type="active site" evidence="1">
    <location>
        <position position="265"/>
    </location>
</feature>
<feature type="binding site" evidence="1">
    <location>
        <begin position="196"/>
        <end position="199"/>
    </location>
    <ligand>
        <name>ATP</name>
        <dbReference type="ChEBI" id="CHEBI:30616"/>
    </ligand>
</feature>
<reference key="1">
    <citation type="journal article" date="2008" name="BMC Genomics">
        <title>Genomics of an extreme psychrophile, Psychromonas ingrahamii.</title>
        <authorList>
            <person name="Riley M."/>
            <person name="Staley J.T."/>
            <person name="Danchin A."/>
            <person name="Wang T.Z."/>
            <person name="Brettin T.S."/>
            <person name="Hauser L.J."/>
            <person name="Land M.L."/>
            <person name="Thompson L.S."/>
        </authorList>
    </citation>
    <scope>NUCLEOTIDE SEQUENCE [LARGE SCALE GENOMIC DNA]</scope>
    <source>
        <strain>DSM 17664 / CCUG 51855 / 37</strain>
    </source>
</reference>